<feature type="chain" id="PRO_1000098332" description="Probable cytosol aminopeptidase">
    <location>
        <begin position="1"/>
        <end position="503"/>
    </location>
</feature>
<feature type="active site" evidence="1">
    <location>
        <position position="280"/>
    </location>
</feature>
<feature type="active site" evidence="1">
    <location>
        <position position="354"/>
    </location>
</feature>
<feature type="binding site" evidence="1">
    <location>
        <position position="268"/>
    </location>
    <ligand>
        <name>Mn(2+)</name>
        <dbReference type="ChEBI" id="CHEBI:29035"/>
        <label>2</label>
    </ligand>
</feature>
<feature type="binding site" evidence="1">
    <location>
        <position position="273"/>
    </location>
    <ligand>
        <name>Mn(2+)</name>
        <dbReference type="ChEBI" id="CHEBI:29035"/>
        <label>1</label>
    </ligand>
</feature>
<feature type="binding site" evidence="1">
    <location>
        <position position="273"/>
    </location>
    <ligand>
        <name>Mn(2+)</name>
        <dbReference type="ChEBI" id="CHEBI:29035"/>
        <label>2</label>
    </ligand>
</feature>
<feature type="binding site" evidence="1">
    <location>
        <position position="291"/>
    </location>
    <ligand>
        <name>Mn(2+)</name>
        <dbReference type="ChEBI" id="CHEBI:29035"/>
        <label>2</label>
    </ligand>
</feature>
<feature type="binding site" evidence="1">
    <location>
        <position position="350"/>
    </location>
    <ligand>
        <name>Mn(2+)</name>
        <dbReference type="ChEBI" id="CHEBI:29035"/>
        <label>1</label>
    </ligand>
</feature>
<feature type="binding site" evidence="1">
    <location>
        <position position="352"/>
    </location>
    <ligand>
        <name>Mn(2+)</name>
        <dbReference type="ChEBI" id="CHEBI:29035"/>
        <label>1</label>
    </ligand>
</feature>
<feature type="binding site" evidence="1">
    <location>
        <position position="352"/>
    </location>
    <ligand>
        <name>Mn(2+)</name>
        <dbReference type="ChEBI" id="CHEBI:29035"/>
        <label>2</label>
    </ligand>
</feature>
<gene>
    <name evidence="1" type="primary">pepA</name>
    <name type="ordered locus">NFA_16920</name>
</gene>
<reference key="1">
    <citation type="journal article" date="2004" name="Proc. Natl. Acad. Sci. U.S.A.">
        <title>The complete genomic sequence of Nocardia farcinica IFM 10152.</title>
        <authorList>
            <person name="Ishikawa J."/>
            <person name="Yamashita A."/>
            <person name="Mikami Y."/>
            <person name="Hoshino Y."/>
            <person name="Kurita H."/>
            <person name="Hotta K."/>
            <person name="Shiba T."/>
            <person name="Hattori M."/>
        </authorList>
    </citation>
    <scope>NUCLEOTIDE SEQUENCE [LARGE SCALE GENOMIC DNA]</scope>
    <source>
        <strain>IFM 10152</strain>
    </source>
</reference>
<organism>
    <name type="scientific">Nocardia farcinica (strain IFM 10152)</name>
    <dbReference type="NCBI Taxonomy" id="247156"/>
    <lineage>
        <taxon>Bacteria</taxon>
        <taxon>Bacillati</taxon>
        <taxon>Actinomycetota</taxon>
        <taxon>Actinomycetes</taxon>
        <taxon>Mycobacteriales</taxon>
        <taxon>Nocardiaceae</taxon>
        <taxon>Nocardia</taxon>
    </lineage>
</organism>
<dbReference type="EC" id="3.4.11.1" evidence="1"/>
<dbReference type="EC" id="3.4.11.10" evidence="1"/>
<dbReference type="EMBL" id="AP006618">
    <property type="protein sequence ID" value="BAD56538.1"/>
    <property type="molecule type" value="Genomic_DNA"/>
</dbReference>
<dbReference type="RefSeq" id="WP_011208223.1">
    <property type="nucleotide sequence ID" value="NC_006361.1"/>
</dbReference>
<dbReference type="SMR" id="Q5YZ53"/>
<dbReference type="STRING" id="247156.NFA_16920"/>
<dbReference type="GeneID" id="61132476"/>
<dbReference type="KEGG" id="nfa:NFA_16920"/>
<dbReference type="eggNOG" id="COG0260">
    <property type="taxonomic scope" value="Bacteria"/>
</dbReference>
<dbReference type="HOGENOM" id="CLU_013734_2_0_11"/>
<dbReference type="OrthoDB" id="9809354at2"/>
<dbReference type="Proteomes" id="UP000006820">
    <property type="component" value="Chromosome"/>
</dbReference>
<dbReference type="GO" id="GO:0005737">
    <property type="term" value="C:cytoplasm"/>
    <property type="evidence" value="ECO:0007669"/>
    <property type="project" value="UniProtKB-SubCell"/>
</dbReference>
<dbReference type="GO" id="GO:0030145">
    <property type="term" value="F:manganese ion binding"/>
    <property type="evidence" value="ECO:0007669"/>
    <property type="project" value="UniProtKB-UniRule"/>
</dbReference>
<dbReference type="GO" id="GO:0070006">
    <property type="term" value="F:metalloaminopeptidase activity"/>
    <property type="evidence" value="ECO:0007669"/>
    <property type="project" value="InterPro"/>
</dbReference>
<dbReference type="GO" id="GO:0006508">
    <property type="term" value="P:proteolysis"/>
    <property type="evidence" value="ECO:0007669"/>
    <property type="project" value="UniProtKB-KW"/>
</dbReference>
<dbReference type="CDD" id="cd00433">
    <property type="entry name" value="Peptidase_M17"/>
    <property type="match status" value="1"/>
</dbReference>
<dbReference type="Gene3D" id="3.40.220.10">
    <property type="entry name" value="Leucine Aminopeptidase, subunit E, domain 1"/>
    <property type="match status" value="1"/>
</dbReference>
<dbReference type="Gene3D" id="3.40.630.10">
    <property type="entry name" value="Zn peptidases"/>
    <property type="match status" value="1"/>
</dbReference>
<dbReference type="HAMAP" id="MF_00181">
    <property type="entry name" value="Cytosol_peptidase_M17"/>
    <property type="match status" value="1"/>
</dbReference>
<dbReference type="InterPro" id="IPR011356">
    <property type="entry name" value="Leucine_aapep/pepB"/>
</dbReference>
<dbReference type="InterPro" id="IPR043472">
    <property type="entry name" value="Macro_dom-like"/>
</dbReference>
<dbReference type="InterPro" id="IPR000819">
    <property type="entry name" value="Peptidase_M17_C"/>
</dbReference>
<dbReference type="InterPro" id="IPR023042">
    <property type="entry name" value="Peptidase_M17_leu_NH2_pept"/>
</dbReference>
<dbReference type="InterPro" id="IPR008283">
    <property type="entry name" value="Peptidase_M17_N"/>
</dbReference>
<dbReference type="NCBIfam" id="NF002073">
    <property type="entry name" value="PRK00913.1-2"/>
    <property type="match status" value="1"/>
</dbReference>
<dbReference type="PANTHER" id="PTHR11963:SF23">
    <property type="entry name" value="CYTOSOL AMINOPEPTIDASE"/>
    <property type="match status" value="1"/>
</dbReference>
<dbReference type="PANTHER" id="PTHR11963">
    <property type="entry name" value="LEUCINE AMINOPEPTIDASE-RELATED"/>
    <property type="match status" value="1"/>
</dbReference>
<dbReference type="Pfam" id="PF00883">
    <property type="entry name" value="Peptidase_M17"/>
    <property type="match status" value="1"/>
</dbReference>
<dbReference type="Pfam" id="PF02789">
    <property type="entry name" value="Peptidase_M17_N"/>
    <property type="match status" value="1"/>
</dbReference>
<dbReference type="PRINTS" id="PR00481">
    <property type="entry name" value="LAMNOPPTDASE"/>
</dbReference>
<dbReference type="SUPFAM" id="SSF52949">
    <property type="entry name" value="Macro domain-like"/>
    <property type="match status" value="1"/>
</dbReference>
<dbReference type="SUPFAM" id="SSF53187">
    <property type="entry name" value="Zn-dependent exopeptidases"/>
    <property type="match status" value="1"/>
</dbReference>
<dbReference type="PROSITE" id="PS00631">
    <property type="entry name" value="CYTOSOL_AP"/>
    <property type="match status" value="1"/>
</dbReference>
<keyword id="KW-0031">Aminopeptidase</keyword>
<keyword id="KW-0963">Cytoplasm</keyword>
<keyword id="KW-0378">Hydrolase</keyword>
<keyword id="KW-0464">Manganese</keyword>
<keyword id="KW-0479">Metal-binding</keyword>
<keyword id="KW-0645">Protease</keyword>
<keyword id="KW-1185">Reference proteome</keyword>
<accession>Q5YZ53</accession>
<protein>
    <recommendedName>
        <fullName evidence="1">Probable cytosol aminopeptidase</fullName>
        <ecNumber evidence="1">3.4.11.1</ecNumber>
    </recommendedName>
    <alternativeName>
        <fullName evidence="1">Leucine aminopeptidase</fullName>
        <shortName evidence="1">LAP</shortName>
        <ecNumber evidence="1">3.4.11.10</ecNumber>
    </alternativeName>
    <alternativeName>
        <fullName evidence="1">Leucyl aminopeptidase</fullName>
    </alternativeName>
</protein>
<sequence>MTAVADRSLGPELARTETLGPDTDVLVIGLTSSENGPSIAPDDMFGDVLTEDVRAELLDQLGAVGAKGKAEELTRVPAPAALEGVTSVLAVGLGAPDKLDAEQLRRSAGVAARSLTGTEVVATTLGGIDIAAAAEGFYLGAYTFTPFRSAKSAPKPDERPVAKVEFLVPTADFGEEALFRAQLVAEAVATARDFVNTPPSHLYPAEFAARTQVLAEAAGLDVEVLDENALEAGGYGGVLGVGKGSSRPPRLVRLTYAGGPKKVALIGKGVTFDTGGISIKPAQNMENMTSDMAGAAAVIATTLLAARLSLPITVTATVPMAENMPSATAQRPGDVLTQYGGTTVEVLNTDAEGRLILADAIVRAGEDSPEFLIDVATLTGAQMVALGTRTPGVMGTDEFRDRVARISQEVGENGWPMPLPAELRADLNSKIADLANVAPHRWGGMLSAGLFLREFVPEGVQWAHLDVAGPAYNTGGPFGYIGKGGTGVPVRTLIAVLEDIAAE</sequence>
<name>AMPA_NOCFA</name>
<proteinExistence type="inferred from homology"/>
<evidence type="ECO:0000255" key="1">
    <source>
        <dbReference type="HAMAP-Rule" id="MF_00181"/>
    </source>
</evidence>
<comment type="function">
    <text evidence="1">Presumably involved in the processing and regular turnover of intracellular proteins. Catalyzes the removal of unsubstituted N-terminal amino acids from various peptides.</text>
</comment>
<comment type="catalytic activity">
    <reaction evidence="1">
        <text>Release of an N-terminal amino acid, Xaa-|-Yaa-, in which Xaa is preferably Leu, but may be other amino acids including Pro although not Arg or Lys, and Yaa may be Pro. Amino acid amides and methyl esters are also readily hydrolyzed, but rates on arylamides are exceedingly low.</text>
        <dbReference type="EC" id="3.4.11.1"/>
    </reaction>
</comment>
<comment type="catalytic activity">
    <reaction evidence="1">
        <text>Release of an N-terminal amino acid, preferentially leucine, but not glutamic or aspartic acids.</text>
        <dbReference type="EC" id="3.4.11.10"/>
    </reaction>
</comment>
<comment type="cofactor">
    <cofactor evidence="1">
        <name>Mn(2+)</name>
        <dbReference type="ChEBI" id="CHEBI:29035"/>
    </cofactor>
    <text evidence="1">Binds 2 manganese ions per subunit.</text>
</comment>
<comment type="subcellular location">
    <subcellularLocation>
        <location evidence="1">Cytoplasm</location>
    </subcellularLocation>
</comment>
<comment type="similarity">
    <text evidence="1">Belongs to the peptidase M17 family.</text>
</comment>